<sequence>MKAIIVLLMVVTSNADRICTGITSSNSPHVVKTATQGEVNVTGVIPLTTTPTKSHFANLKGTKTRGKLCPNCLNCTDLDVALGRPKCMGTIPSAKASILHEVKPVTSGCFPIMHDRTKIRQLPNLLRGYENIRLSTRNVINAERAPGGPYIIGTSGSCPNVTNGNGFFATMAWAVPKDNKTATNPLTVEVPYICTKGEDQITVWGFHSDNEAQMVKLYGDSKPQKFTSSANGVTTHYVSQIGGFPNQTEDGGLPQSGRIVVDYMVQKPGKTGTIVYQRGVLLPQKVWCASGRSKVIKGSLPLIGEADCLHEKYGGLNKSKPYYTGEHAKAIGNCPIWVKTPLKLANGTKYRPPAKLLKERGFFGAIAGFLEGGWEGMIAGWHGYTSHGAHGVAVAADLKSTQEAINKITKNLNSLSELEVKNLQRLSGAMDELHNEILELDEKVDDLRADTISSQIELAVLLSNEGIINSEDEHLLALERKLKKMLGPSAVDIGNGCFETKHKCNQTCLDRIAAGTFNAGEFSLPTFDSLNITAASLNDDGLDNHTILLYYSTAASSLAVTLMIAIFIVYMVSRDNVSCSICL</sequence>
<proteinExistence type="inferred from homology"/>
<reference key="1">
    <citation type="journal article" date="1984" name="J. Virol.">
        <title>Antigenic structure of the influenza B virus hemagglutinin: nucleotide sequence analysis of antigenic variants selected with monoclonal antibodies.</title>
        <authorList>
            <person name="Berton M.T."/>
            <person name="Naeve C.W."/>
            <person name="Webster R.G."/>
        </authorList>
    </citation>
    <scope>NUCLEOTIDE SEQUENCE [GENOMIC RNA]</scope>
</reference>
<name>HEMA_INBOR</name>
<keyword id="KW-1015">Disulfide bond</keyword>
<keyword id="KW-1170">Fusion of virus membrane with host endosomal membrane</keyword>
<keyword id="KW-1168">Fusion of virus membrane with host membrane</keyword>
<keyword id="KW-0325">Glycoprotein</keyword>
<keyword id="KW-0348">Hemagglutinin</keyword>
<keyword id="KW-1032">Host cell membrane</keyword>
<keyword id="KW-1043">Host membrane</keyword>
<keyword id="KW-0945">Host-virus interaction</keyword>
<keyword id="KW-0449">Lipoprotein</keyword>
<keyword id="KW-0472">Membrane</keyword>
<keyword id="KW-0564">Palmitate</keyword>
<keyword id="KW-0732">Signal</keyword>
<keyword id="KW-0812">Transmembrane</keyword>
<keyword id="KW-1133">Transmembrane helix</keyword>
<keyword id="KW-1161">Viral attachment to host cell</keyword>
<keyword id="KW-0261">Viral envelope protein</keyword>
<keyword id="KW-1162">Viral penetration into host cytoplasm</keyword>
<keyword id="KW-0946">Virion</keyword>
<keyword id="KW-1164">Virus endocytosis by host</keyword>
<keyword id="KW-1160">Virus entry into host cell</keyword>
<accession>P03464</accession>
<evidence type="ECO:0000255" key="1">
    <source>
        <dbReference type="HAMAP-Rule" id="MF_04072"/>
    </source>
</evidence>
<evidence type="ECO:0000305" key="2"/>
<gene>
    <name evidence="1" type="primary">HA</name>
</gene>
<organismHost>
    <name type="scientific">Homo sapiens</name>
    <name type="common">Human</name>
    <dbReference type="NCBI Taxonomy" id="9606"/>
</organismHost>
<comment type="function">
    <text evidence="1">Binds to sialic acid-containing receptors on the cell surface, bringing about the attachment of the virus particle to the cell. Plays a major role in the determination of host range restriction and virulence. Class I viral fusion protein. Responsible for penetration of the virus into the cell cytoplasm by mediating the fusion of the membrane of the endocytosed virus particle with the endosomal membrane. Low pH in endosomes induce an irreversible conformational change in HA2, releasing the fusion hydrophobic peptide. Several trimers are required to form a competent fusion pore.</text>
</comment>
<comment type="subunit">
    <text evidence="1">Homotrimer of disulfide-linked HA1-HA2.</text>
</comment>
<comment type="subcellular location">
    <subcellularLocation>
        <location evidence="1">Virion membrane</location>
        <topology evidence="1">Single-pass type I membrane protein</topology>
    </subcellularLocation>
    <subcellularLocation>
        <location evidence="1">Host apical cell membrane</location>
        <topology evidence="1">Single-pass type I membrane protein</topology>
    </subcellularLocation>
    <text evidence="1">Targeted to the apical plasma membrane in epithelial polarized cells through a signal present in the transmembrane domain. Associated with glycosphingolipid- and cholesterol-enriched detergent-resistant lipid rafts.</text>
</comment>
<comment type="PTM">
    <text evidence="1">Palmitoylated.</text>
</comment>
<comment type="PTM">
    <text evidence="1">In natural infection, inactive HA is matured into HA1 and HA2 outside the cell by one or more trypsin-like, arginine-specific endoprotease secreted by the bronchial epithelial cells. One identified protease that may be involved in this process is secreted in lungs by club cells.</text>
</comment>
<comment type="miscellaneous">
    <text>Major glycoprotein, comprises over 80% of the envelope proteins present in virus particle.</text>
</comment>
<comment type="miscellaneous">
    <text>The extent of infection into host organism is determined by HA. Influenza viruses bud from the apical surface of polarized epithelial cells (e.g. bronchial epithelial cells) into lumen of lungs and are therefore usually pneumotropic. The reason is that HA is cleaved by tryptase clara which is restricted to lungs. However, HAs of H5 and H7 pantropic avian viruses subtypes can be cleaved by furin and subtilisin-type enzymes, allowing the virus to grow in other organs than lungs.</text>
</comment>
<comment type="miscellaneous">
    <text evidence="2">The influenza B genome consist of 8 RNA segments. Genetic variation of hemagglutinin and/or neuraminidase genes results in the emergence of new influenza strains. The mechanism of variation can be the result of point mutations or the result of genetic reassortment between segments of two different strains.</text>
</comment>
<comment type="similarity">
    <text evidence="1">Belongs to the influenza viruses hemagglutinin family.</text>
</comment>
<organism>
    <name type="scientific">Influenza B virus (strain B/Oregon/5/1980)</name>
    <dbReference type="NCBI Taxonomy" id="11541"/>
    <lineage>
        <taxon>Viruses</taxon>
        <taxon>Riboviria</taxon>
        <taxon>Orthornavirae</taxon>
        <taxon>Negarnaviricota</taxon>
        <taxon>Polyploviricotina</taxon>
        <taxon>Insthoviricetes</taxon>
        <taxon>Articulavirales</taxon>
        <taxon>Orthomyxoviridae</taxon>
        <taxon>Betainfluenzavirus</taxon>
        <taxon>Betainfluenzavirus influenzae</taxon>
        <taxon>Influenza B virus</taxon>
    </lineage>
</organism>
<protein>
    <recommendedName>
        <fullName evidence="1">Hemagglutinin</fullName>
    </recommendedName>
    <component>
        <recommendedName>
            <fullName evidence="1">Hemagglutinin HA1 chain</fullName>
        </recommendedName>
    </component>
    <component>
        <recommendedName>
            <fullName evidence="1">Hemagglutinin HA2 chain</fullName>
        </recommendedName>
    </component>
</protein>
<dbReference type="EMBL" id="K02713">
    <property type="protein sequence ID" value="AAA43702.1"/>
    <property type="molecule type" value="Genomic_RNA"/>
</dbReference>
<dbReference type="PIR" id="A04075">
    <property type="entry name" value="HMIVHO"/>
</dbReference>
<dbReference type="SMR" id="P03464"/>
<dbReference type="GlyCosmos" id="P03464">
    <property type="glycosylation" value="10 sites, No reported glycans"/>
</dbReference>
<dbReference type="GO" id="GO:0020002">
    <property type="term" value="C:host cell plasma membrane"/>
    <property type="evidence" value="ECO:0007669"/>
    <property type="project" value="UniProtKB-SubCell"/>
</dbReference>
<dbReference type="GO" id="GO:0016020">
    <property type="term" value="C:membrane"/>
    <property type="evidence" value="ECO:0007669"/>
    <property type="project" value="UniProtKB-UniRule"/>
</dbReference>
<dbReference type="GO" id="GO:0019031">
    <property type="term" value="C:viral envelope"/>
    <property type="evidence" value="ECO:0007669"/>
    <property type="project" value="UniProtKB-UniRule"/>
</dbReference>
<dbReference type="GO" id="GO:0055036">
    <property type="term" value="C:virion membrane"/>
    <property type="evidence" value="ECO:0007669"/>
    <property type="project" value="UniProtKB-SubCell"/>
</dbReference>
<dbReference type="GO" id="GO:0046789">
    <property type="term" value="F:host cell surface receptor binding"/>
    <property type="evidence" value="ECO:0007669"/>
    <property type="project" value="UniProtKB-UniRule"/>
</dbReference>
<dbReference type="GO" id="GO:0075509">
    <property type="term" value="P:endocytosis involved in viral entry into host cell"/>
    <property type="evidence" value="ECO:0007669"/>
    <property type="project" value="UniProtKB-KW"/>
</dbReference>
<dbReference type="GO" id="GO:0039654">
    <property type="term" value="P:fusion of virus membrane with host endosome membrane"/>
    <property type="evidence" value="ECO:0007669"/>
    <property type="project" value="UniProtKB-UniRule"/>
</dbReference>
<dbReference type="GO" id="GO:0019064">
    <property type="term" value="P:fusion of virus membrane with host plasma membrane"/>
    <property type="evidence" value="ECO:0007669"/>
    <property type="project" value="InterPro"/>
</dbReference>
<dbReference type="GO" id="GO:0046761">
    <property type="term" value="P:viral budding from plasma membrane"/>
    <property type="evidence" value="ECO:0007669"/>
    <property type="project" value="UniProtKB-UniRule"/>
</dbReference>
<dbReference type="GO" id="GO:0019062">
    <property type="term" value="P:virion attachment to host cell"/>
    <property type="evidence" value="ECO:0007669"/>
    <property type="project" value="UniProtKB-KW"/>
</dbReference>
<dbReference type="Gene3D" id="3.90.20.10">
    <property type="match status" value="1"/>
</dbReference>
<dbReference type="Gene3D" id="3.90.209.20">
    <property type="match status" value="1"/>
</dbReference>
<dbReference type="Gene3D" id="2.10.77.10">
    <property type="entry name" value="Hemagglutinin Chain A, Domain 2"/>
    <property type="match status" value="1"/>
</dbReference>
<dbReference type="HAMAP" id="MF_04072">
    <property type="entry name" value="INFV_HEMA"/>
    <property type="match status" value="1"/>
</dbReference>
<dbReference type="InterPro" id="IPR008980">
    <property type="entry name" value="Capsid_hemagglutn"/>
</dbReference>
<dbReference type="InterPro" id="IPR013828">
    <property type="entry name" value="Hemagglutn_HA1_a/b_dom_sf"/>
</dbReference>
<dbReference type="InterPro" id="IPR001364">
    <property type="entry name" value="Hemagglutn_influenz_A/B"/>
</dbReference>
<dbReference type="InterPro" id="IPR000386">
    <property type="entry name" value="Hemagglutn_influenz_B"/>
</dbReference>
<dbReference type="Pfam" id="PF00509">
    <property type="entry name" value="Hemagglutinin"/>
    <property type="match status" value="1"/>
</dbReference>
<dbReference type="PRINTS" id="PR00329">
    <property type="entry name" value="HEMAGGLUTN12"/>
</dbReference>
<dbReference type="PRINTS" id="PR00331">
    <property type="entry name" value="HEMAGGLUTN2"/>
</dbReference>
<dbReference type="SUPFAM" id="SSF58064">
    <property type="entry name" value="Influenza hemagglutinin (stalk)"/>
    <property type="match status" value="1"/>
</dbReference>
<dbReference type="SUPFAM" id="SSF49818">
    <property type="entry name" value="Viral protein domain"/>
    <property type="match status" value="1"/>
</dbReference>
<feature type="signal peptide" evidence="1">
    <location>
        <begin position="1"/>
        <end position="15"/>
    </location>
</feature>
<feature type="chain" id="PRO_0000440548" description="Hemagglutinin" evidence="1">
    <location>
        <begin position="16"/>
        <end position="583"/>
    </location>
</feature>
<feature type="chain" id="PRO_0000039122" description="Hemagglutinin HA1 chain" evidence="1">
    <location>
        <begin position="16"/>
        <end position="359"/>
    </location>
</feature>
<feature type="chain" id="PRO_0000039123" description="Hemagglutinin HA2 chain" evidence="1">
    <location>
        <begin position="361"/>
        <end position="583"/>
    </location>
</feature>
<feature type="topological domain" description="Extracellular" evidence="1">
    <location>
        <begin position="16"/>
        <end position="551"/>
    </location>
</feature>
<feature type="transmembrane region" description="Helical" evidence="1">
    <location>
        <begin position="552"/>
        <end position="572"/>
    </location>
</feature>
<feature type="topological domain" description="Cytoplasmic" evidence="1">
    <location>
        <begin position="573"/>
        <end position="583"/>
    </location>
</feature>
<feature type="site" description="Cleavage; by host" evidence="1">
    <location>
        <begin position="360"/>
        <end position="361"/>
    </location>
</feature>
<feature type="lipid moiety-binding region" description="S-palmitoyl cysteine; by host" evidence="1">
    <location>
        <position position="579"/>
    </location>
</feature>
<feature type="lipid moiety-binding region" description="S-palmitoyl cysteine; by host" evidence="1">
    <location>
        <position position="582"/>
    </location>
</feature>
<feature type="glycosylation site" description="N-linked (GlcNAc...) asparagine; by host" evidence="1">
    <location>
        <position position="40"/>
    </location>
</feature>
<feature type="glycosylation site" description="N-linked (GlcNAc...) asparagine; by host" evidence="1">
    <location>
        <position position="74"/>
    </location>
</feature>
<feature type="glycosylation site" description="N-linked (GlcNAc...) asparagine; by host" evidence="1">
    <location>
        <position position="160"/>
    </location>
</feature>
<feature type="glycosylation site" description="N-linked (GlcNAc...) asparagine; by host" evidence="1">
    <location>
        <position position="179"/>
    </location>
</feature>
<feature type="glycosylation site" description="N-linked (GlcNAc...) asparagine; by host" evidence="1">
    <location>
        <position position="246"/>
    </location>
</feature>
<feature type="glycosylation site" description="N-linked (GlcNAc...) asparagine; by host" evidence="1">
    <location>
        <position position="317"/>
    </location>
</feature>
<feature type="glycosylation site" description="N-linked (GlcNAc...) asparagine; by host" evidence="1">
    <location>
        <position position="346"/>
    </location>
</feature>
<feature type="glycosylation site" description="N-linked (GlcNAc...) asparagine; by host" evidence="1">
    <location>
        <position position="505"/>
    </location>
</feature>
<feature type="glycosylation site" description="N-linked (GlcNAc...) asparagine; by host" evidence="1">
    <location>
        <position position="531"/>
    </location>
</feature>
<feature type="glycosylation site" description="N-linked (GlcNAc...) asparagine; by host" evidence="1">
    <location>
        <position position="544"/>
    </location>
</feature>
<feature type="disulfide bond" description="Interchain (between HA1 and HA2 chains)" evidence="1">
    <location>
        <begin position="19"/>
        <end position="497"/>
    </location>
</feature>
<feature type="disulfide bond" evidence="1">
    <location>
        <begin position="75"/>
        <end position="87"/>
    </location>
</feature>
<feature type="disulfide bond" evidence="1">
    <location>
        <begin position="109"/>
        <end position="158"/>
    </location>
</feature>
<feature type="disulfide bond" evidence="1">
    <location>
        <begin position="504"/>
        <end position="508"/>
    </location>
</feature>